<keyword id="KW-0963">Cytoplasm</keyword>
<keyword id="KW-0255">Endonuclease</keyword>
<keyword id="KW-0378">Hydrolase</keyword>
<keyword id="KW-0479">Metal-binding</keyword>
<keyword id="KW-0540">Nuclease</keyword>
<keyword id="KW-0690">Ribosome biogenesis</keyword>
<keyword id="KW-0698">rRNA processing</keyword>
<keyword id="KW-0862">Zinc</keyword>
<comment type="function">
    <text evidence="1">Single strand-specific metallo-endoribonuclease involved in late-stage 70S ribosome quality control and in maturation of the 3' terminus of the 16S rRNA.</text>
</comment>
<comment type="cofactor">
    <cofactor evidence="1">
        <name>Zn(2+)</name>
        <dbReference type="ChEBI" id="CHEBI:29105"/>
    </cofactor>
    <text evidence="1">Binds 1 zinc ion.</text>
</comment>
<comment type="subcellular location">
    <subcellularLocation>
        <location evidence="1">Cytoplasm</location>
    </subcellularLocation>
</comment>
<comment type="similarity">
    <text evidence="1">Belongs to the endoribonuclease YbeY family.</text>
</comment>
<gene>
    <name evidence="1" type="primary">ybeY</name>
    <name type="ordered locus">VFMJ11_0776</name>
</gene>
<protein>
    <recommendedName>
        <fullName evidence="1">Endoribonuclease YbeY</fullName>
        <ecNumber evidence="1">3.1.-.-</ecNumber>
    </recommendedName>
</protein>
<reference key="1">
    <citation type="submission" date="2008-08" db="EMBL/GenBank/DDBJ databases">
        <title>Complete sequence of Vibrio fischeri strain MJ11.</title>
        <authorList>
            <person name="Mandel M.J."/>
            <person name="Stabb E.V."/>
            <person name="Ruby E.G."/>
            <person name="Ferriera S."/>
            <person name="Johnson J."/>
            <person name="Kravitz S."/>
            <person name="Beeson K."/>
            <person name="Sutton G."/>
            <person name="Rogers Y.-H."/>
            <person name="Friedman R."/>
            <person name="Frazier M."/>
            <person name="Venter J.C."/>
        </authorList>
    </citation>
    <scope>NUCLEOTIDE SEQUENCE [LARGE SCALE GENOMIC DNA]</scope>
    <source>
        <strain>MJ11</strain>
    </source>
</reference>
<accession>B5FBL1</accession>
<evidence type="ECO:0000255" key="1">
    <source>
        <dbReference type="HAMAP-Rule" id="MF_00009"/>
    </source>
</evidence>
<organism>
    <name type="scientific">Aliivibrio fischeri (strain MJ11)</name>
    <name type="common">Vibrio fischeri</name>
    <dbReference type="NCBI Taxonomy" id="388396"/>
    <lineage>
        <taxon>Bacteria</taxon>
        <taxon>Pseudomonadati</taxon>
        <taxon>Pseudomonadota</taxon>
        <taxon>Gammaproteobacteria</taxon>
        <taxon>Vibrionales</taxon>
        <taxon>Vibrionaceae</taxon>
        <taxon>Aliivibrio</taxon>
    </lineage>
</organism>
<sequence>MSIELDLQIACENENGLPSEKDLMTWLNAVIPQFQPQAELTIRIVDEKESHELNHEYRGKDKPTNVLSFPFEAPPGLELDLLGDLIICRQVVEEEAIEQNKPLLAHWAHMVVHGSLHLLGYDHIEDDEAEEMESLETELMQGMGFEDPYIAEK</sequence>
<dbReference type="EC" id="3.1.-.-" evidence="1"/>
<dbReference type="EMBL" id="CP001139">
    <property type="protein sequence ID" value="ACH66238.1"/>
    <property type="molecule type" value="Genomic_DNA"/>
</dbReference>
<dbReference type="RefSeq" id="WP_012533592.1">
    <property type="nucleotide sequence ID" value="NC_011184.1"/>
</dbReference>
<dbReference type="SMR" id="B5FBL1"/>
<dbReference type="KEGG" id="vfm:VFMJ11_0776"/>
<dbReference type="HOGENOM" id="CLU_106710_0_1_6"/>
<dbReference type="Proteomes" id="UP000001857">
    <property type="component" value="Chromosome I"/>
</dbReference>
<dbReference type="GO" id="GO:0005737">
    <property type="term" value="C:cytoplasm"/>
    <property type="evidence" value="ECO:0007669"/>
    <property type="project" value="UniProtKB-SubCell"/>
</dbReference>
<dbReference type="GO" id="GO:0004222">
    <property type="term" value="F:metalloendopeptidase activity"/>
    <property type="evidence" value="ECO:0007669"/>
    <property type="project" value="InterPro"/>
</dbReference>
<dbReference type="GO" id="GO:0004521">
    <property type="term" value="F:RNA endonuclease activity"/>
    <property type="evidence" value="ECO:0007669"/>
    <property type="project" value="UniProtKB-UniRule"/>
</dbReference>
<dbReference type="GO" id="GO:0008270">
    <property type="term" value="F:zinc ion binding"/>
    <property type="evidence" value="ECO:0007669"/>
    <property type="project" value="UniProtKB-UniRule"/>
</dbReference>
<dbReference type="GO" id="GO:0006364">
    <property type="term" value="P:rRNA processing"/>
    <property type="evidence" value="ECO:0007669"/>
    <property type="project" value="UniProtKB-UniRule"/>
</dbReference>
<dbReference type="Gene3D" id="3.40.390.30">
    <property type="entry name" value="Metalloproteases ('zincins'), catalytic domain"/>
    <property type="match status" value="1"/>
</dbReference>
<dbReference type="HAMAP" id="MF_00009">
    <property type="entry name" value="Endoribonucl_YbeY"/>
    <property type="match status" value="1"/>
</dbReference>
<dbReference type="InterPro" id="IPR023091">
    <property type="entry name" value="MetalPrtase_cat_dom_sf_prd"/>
</dbReference>
<dbReference type="InterPro" id="IPR002036">
    <property type="entry name" value="YbeY"/>
</dbReference>
<dbReference type="InterPro" id="IPR020549">
    <property type="entry name" value="YbeY_CS"/>
</dbReference>
<dbReference type="NCBIfam" id="TIGR00043">
    <property type="entry name" value="rRNA maturation RNase YbeY"/>
    <property type="match status" value="1"/>
</dbReference>
<dbReference type="PANTHER" id="PTHR46986">
    <property type="entry name" value="ENDORIBONUCLEASE YBEY, CHLOROPLASTIC"/>
    <property type="match status" value="1"/>
</dbReference>
<dbReference type="PANTHER" id="PTHR46986:SF1">
    <property type="entry name" value="ENDORIBONUCLEASE YBEY, CHLOROPLASTIC"/>
    <property type="match status" value="1"/>
</dbReference>
<dbReference type="Pfam" id="PF02130">
    <property type="entry name" value="YbeY"/>
    <property type="match status" value="1"/>
</dbReference>
<dbReference type="SUPFAM" id="SSF55486">
    <property type="entry name" value="Metalloproteases ('zincins'), catalytic domain"/>
    <property type="match status" value="1"/>
</dbReference>
<dbReference type="PROSITE" id="PS01306">
    <property type="entry name" value="UPF0054"/>
    <property type="match status" value="1"/>
</dbReference>
<feature type="chain" id="PRO_1000089226" description="Endoribonuclease YbeY">
    <location>
        <begin position="1"/>
        <end position="153"/>
    </location>
</feature>
<feature type="binding site" evidence="1">
    <location>
        <position position="113"/>
    </location>
    <ligand>
        <name>Zn(2+)</name>
        <dbReference type="ChEBI" id="CHEBI:29105"/>
        <note>catalytic</note>
    </ligand>
</feature>
<feature type="binding site" evidence="1">
    <location>
        <position position="117"/>
    </location>
    <ligand>
        <name>Zn(2+)</name>
        <dbReference type="ChEBI" id="CHEBI:29105"/>
        <note>catalytic</note>
    </ligand>
</feature>
<feature type="binding site" evidence="1">
    <location>
        <position position="123"/>
    </location>
    <ligand>
        <name>Zn(2+)</name>
        <dbReference type="ChEBI" id="CHEBI:29105"/>
        <note>catalytic</note>
    </ligand>
</feature>
<proteinExistence type="inferred from homology"/>
<name>YBEY_ALIFM</name>